<feature type="chain" id="PRO_0000116311" description="Protein U5">
    <location>
        <begin position="1"/>
        <end position="865"/>
    </location>
</feature>
<evidence type="ECO:0000305" key="1"/>
<dbReference type="EMBL" id="U43400">
    <property type="protein sequence ID" value="AAC54669.1"/>
    <property type="molecule type" value="Genomic_DNA"/>
</dbReference>
<dbReference type="PIR" id="T41909">
    <property type="entry name" value="T41909"/>
</dbReference>
<dbReference type="Proteomes" id="UP000009246">
    <property type="component" value="Segment"/>
</dbReference>
<dbReference type="InterPro" id="IPR010302">
    <property type="entry name" value="UL27-like_protein_herpesevirus"/>
</dbReference>
<dbReference type="InterPro" id="IPR003360">
    <property type="entry name" value="US22-like"/>
</dbReference>
<dbReference type="Pfam" id="PF05999">
    <property type="entry name" value="Herpes_U5"/>
    <property type="match status" value="1"/>
</dbReference>
<dbReference type="Pfam" id="PF02393">
    <property type="entry name" value="US22"/>
    <property type="match status" value="1"/>
</dbReference>
<organismHost>
    <name type="scientific">Homo sapiens</name>
    <name type="common">Human</name>
    <dbReference type="NCBI Taxonomy" id="9606"/>
</organismHost>
<reference key="1">
    <citation type="journal article" date="1996" name="J. Virol.">
        <title>Determination and analysis of the complete nucleotide sequence of human herpesvirus.</title>
        <authorList>
            <person name="Nicholas J."/>
        </authorList>
    </citation>
    <scope>NUCLEOTIDE SEQUENCE [LARGE SCALE GENOMIC DNA]</scope>
</reference>
<keyword id="KW-1185">Reference proteome</keyword>
<sequence length="865" mass="100188">MEIVRNGIKCCLAWPPNYVLIFGEFYHFKCRRSVITYDWSNLVGADEFLCAVGYAHPNYREPDPDFDPFVMYCSSNKMLALDTVTDELYIIAESPAHFCSIGLRNFPPFARIELDIELDRLWYGETKCSGEEFVLLQKNIPALKNFVNRQCGQKIRIDAFQNFDLSFCSSNDIHYITGSGILEKILRRKYVVIGTCARCQVEPNCRAVILLGPNFHIYVYCDNKINKVARSIREFIRRGFEELLYKERYALNWHDDSLIYVSESEAENLNRMLNGESPILRKKPRHMYPRCDRYVKIKVLLFGILYTILLLMVPWMFFFRLLKNMPSILFAVHSSEISNPLVQSVTKFLHPIIIPNGDTELKYIVPVTESRLINGLQASAAGRFGIKGLRLCSDGVIWNRLIDYEYEMFKYPSTFTRADKFLLQLRDLKFMEDFDPKWQCITKLAAVGFYSGASLFNLGAKPGIGYWCRYLCEYLSMLFFKLDGKLKELSKESKQKLGGFSCAFWSESFKTEMQNKTESFFRRDFFDRFQLYLLEHFLLFCGCEECRYNFFRFKNVGTMKKNPGSVKLHFFPALGKIDLPIFPHLSEKYSNLSMFVAKDLCLSFIEGQIEHSRFPISVTVDMGQDKRNLLNILSNIVFLLFIIQTLNSVLFTELKMYYDVYLDELKNLESSMECEMKLGSKGCMNNIVYFNMLKQVKDIVRNPGTSSNFIFNCLEVIKMSFEIPYYKNYDETNFMESFYLHHLYIQRQPAKHTDLVAANNLAPGFFIVNAKEKSFIDVLERSIVNIEAEYLSNTKNINGAMALFFSGLKYFGNFGNGNFQTSPEKDVRAVGYKLGGLDKIQNDLCYFANVETLACVGVDASDGNE</sequence>
<protein>
    <recommendedName>
        <fullName>Protein U5</fullName>
    </recommendedName>
</protein>
<organism>
    <name type="scientific">Human herpesvirus 7 (strain JI)</name>
    <name type="common">HHV-7</name>
    <name type="synonym">Human T lymphotropic virus</name>
    <dbReference type="NCBI Taxonomy" id="57278"/>
    <lineage>
        <taxon>Viruses</taxon>
        <taxon>Duplodnaviria</taxon>
        <taxon>Heunggongvirae</taxon>
        <taxon>Peploviricota</taxon>
        <taxon>Herviviricetes</taxon>
        <taxon>Herpesvirales</taxon>
        <taxon>Orthoherpesviridae</taxon>
        <taxon>Betaherpesvirinae</taxon>
        <taxon>Roseolovirus</taxon>
        <taxon>Roseolovirus humanbeta7</taxon>
        <taxon>Human betaherpesvirus 7</taxon>
    </lineage>
</organism>
<accession>P52522</accession>
<name>VU5_HHV7J</name>
<proteinExistence type="inferred from homology"/>
<comment type="similarity">
    <text evidence="1">Belongs to the herpesviridae U4 family.</text>
</comment>
<gene>
    <name type="primary">U5</name>
</gene>